<sequence length="102" mass="10944">MGKVLRKPFAKAVPLLFLAATWLLTGVLPAGASSPTNAAAASLTEAQDQFYSYTCNADTFSPSLTSFASIWALLTLVLVIIASAIYLMYVCFNKFVNTLLTD</sequence>
<proteinExistence type="evidence at protein level"/>
<dbReference type="EMBL" id="V01555">
    <property type="protein sequence ID" value="CAA24851.1"/>
    <property type="molecule type" value="Genomic_DNA"/>
</dbReference>
<dbReference type="EMBL" id="AJ507799">
    <property type="protein sequence ID" value="CAD53415.1"/>
    <property type="molecule type" value="Genomic_DNA"/>
</dbReference>
<dbReference type="PIR" id="F43041">
    <property type="entry name" value="QQBE18"/>
</dbReference>
<dbReference type="RefSeq" id="YP_401665.1">
    <property type="nucleotide sequence ID" value="NC_007605.1"/>
</dbReference>
<dbReference type="SMR" id="P03196"/>
<dbReference type="BioGRID" id="971758">
    <property type="interactions" value="1"/>
</dbReference>
<dbReference type="IntAct" id="P03196">
    <property type="interactions" value="4"/>
</dbReference>
<dbReference type="MINT" id="P03196"/>
<dbReference type="DNASU" id="3783716"/>
<dbReference type="GeneID" id="3783716"/>
<dbReference type="KEGG" id="vg:3783716"/>
<dbReference type="Proteomes" id="UP000153037">
    <property type="component" value="Segment"/>
</dbReference>
<dbReference type="GO" id="GO:0044177">
    <property type="term" value="C:host cell Golgi apparatus"/>
    <property type="evidence" value="ECO:0007669"/>
    <property type="project" value="UniProtKB-SubCell"/>
</dbReference>
<dbReference type="GO" id="GO:0033644">
    <property type="term" value="C:host cell membrane"/>
    <property type="evidence" value="ECO:0007669"/>
    <property type="project" value="UniProtKB-SubCell"/>
</dbReference>
<dbReference type="GO" id="GO:0016020">
    <property type="term" value="C:membrane"/>
    <property type="evidence" value="ECO:0007669"/>
    <property type="project" value="UniProtKB-KW"/>
</dbReference>
<dbReference type="GO" id="GO:0019031">
    <property type="term" value="C:viral envelope"/>
    <property type="evidence" value="ECO:0007669"/>
    <property type="project" value="UniProtKB-KW"/>
</dbReference>
<dbReference type="GO" id="GO:0055036">
    <property type="term" value="C:virion membrane"/>
    <property type="evidence" value="ECO:0007669"/>
    <property type="project" value="UniProtKB-SubCell"/>
</dbReference>
<dbReference type="HAMAP" id="MF_04037">
    <property type="entry name" value="HSV_GN"/>
    <property type="match status" value="1"/>
</dbReference>
<dbReference type="InterPro" id="IPR005211">
    <property type="entry name" value="Herpes_glycoprotein_N_domain"/>
</dbReference>
<dbReference type="InterPro" id="IPR034707">
    <property type="entry name" value="HSV_GN"/>
</dbReference>
<dbReference type="Pfam" id="PF03554">
    <property type="entry name" value="Herpes_UL73"/>
    <property type="match status" value="1"/>
</dbReference>
<comment type="function">
    <text evidence="1 2">Envelope glycoprotein necessary for proper maturation of gM and modulation of its membrane fusion activity. Also plays a critical role in virion morphogenesis.</text>
</comment>
<comment type="subunit">
    <text evidence="1">Interacts (via N-terminus) with gM (via N-terminus). The gM-gN heterodimer forms the gCII complex.</text>
</comment>
<comment type="subcellular location">
    <subcellularLocation>
        <location evidence="1">Virion membrane</location>
        <topology evidence="1">Single-pass type I membrane protein</topology>
    </subcellularLocation>
    <subcellularLocation>
        <location evidence="1">Host membrane</location>
        <topology evidence="1">Single-pass type I membrane protein</topology>
    </subcellularLocation>
    <subcellularLocation>
        <location evidence="1">Host Golgi apparatus</location>
        <location evidence="1">Host trans-Golgi network</location>
    </subcellularLocation>
    <text evidence="1">When coexpressed with gM, localizes in the host trans-Golgi network.</text>
</comment>
<comment type="PTM">
    <text evidence="3">O-glycosylated (Probable). Contains alpha 2,6-sialic acid residues.</text>
</comment>
<comment type="similarity">
    <text evidence="1">Belongs to the herpesviridae glycoprotein N family.</text>
</comment>
<gene>
    <name evidence="1" type="primary">gN</name>
    <name type="ORF">BLRF1</name>
</gene>
<reference key="1">
    <citation type="journal article" date="1984" name="Nature">
        <title>DNA sequence and expression of the B95-8 Epstein-Barr virus genome.</title>
        <authorList>
            <person name="Baer R."/>
            <person name="Bankier A.T."/>
            <person name="Biggin M.D."/>
            <person name="Deininger P.L."/>
            <person name="Farrell P.J."/>
            <person name="Gibson T.J."/>
            <person name="Hatfull G."/>
            <person name="Hudson G.S."/>
            <person name="Satchwell S.C."/>
            <person name="Seguin C."/>
            <person name="Tuffnell P.S."/>
            <person name="Barrell B.G."/>
        </authorList>
    </citation>
    <scope>NUCLEOTIDE SEQUENCE [LARGE SCALE GENOMIC DNA]</scope>
</reference>
<reference key="2">
    <citation type="journal article" date="2003" name="Virology">
        <title>Updated Epstein-Barr virus (EBV) DNA sequence and analysis of a promoter for the BART (CST, BARF0) RNAs of EBV.</title>
        <authorList>
            <person name="de Jesus O."/>
            <person name="Smith P.R."/>
            <person name="Spender L.C."/>
            <person name="Elgueta Karstegl C."/>
            <person name="Niller H.H."/>
            <person name="Huang D."/>
            <person name="Farrell P.J."/>
        </authorList>
    </citation>
    <scope>GENOME REANNOTATION</scope>
</reference>
<reference key="3">
    <citation type="journal article" date="1998" name="J. Virol.">
        <title>The Epstein-Barr virus (EBV) gN homolog BLRF1 encodes a 15-kilodalton glycoprotein that cannot be authentically processed unless it is coexpressed with the EBV gM homolog BBRF3.</title>
        <authorList>
            <person name="Lake C.M."/>
            <person name="Molesworth S.J."/>
            <person name="Hutt-Fletcher L.M."/>
        </authorList>
    </citation>
    <scope>INTERACTION WITH GM</scope>
    <scope>GLYCOSYLATION</scope>
</reference>
<reference key="4">
    <citation type="journal article" date="2000" name="J. Virol.">
        <title>Epstein-Barr virus that lacks glycoprotein gN is impaired in assembly and infection.</title>
        <authorList>
            <person name="Lake C.M."/>
            <person name="Hutt-Fletcher L.M."/>
        </authorList>
    </citation>
    <scope>FUNCTION</scope>
</reference>
<reference key="5">
    <citation type="journal article" date="2004" name="Proc. Natl. Acad. Sci. U.S.A.">
        <title>Proteins of purified Epstein-Barr virus.</title>
        <authorList>
            <person name="Johannsen E."/>
            <person name="Luftig M."/>
            <person name="Chase M.R."/>
            <person name="Weicksel S."/>
            <person name="Cahir-McFarland E."/>
            <person name="Illanes D."/>
            <person name="Sarracino D."/>
            <person name="Kieff E."/>
        </authorList>
    </citation>
    <scope>SUBCELLULAR LOCATION</scope>
</reference>
<protein>
    <recommendedName>
        <fullName evidence="1">Envelope glycoprotein N</fullName>
    </recommendedName>
</protein>
<name>GN_EBVB9</name>
<feature type="signal peptide" evidence="1">
    <location>
        <begin position="1"/>
        <end position="32"/>
    </location>
</feature>
<feature type="chain" id="PRO_0000116218" description="Envelope glycoprotein N" evidence="1">
    <location>
        <begin position="33"/>
        <end position="102"/>
    </location>
</feature>
<feature type="topological domain" description="Virion surface" evidence="1">
    <location>
        <begin position="33"/>
        <end position="69"/>
    </location>
</feature>
<feature type="transmembrane region" description="Helical" evidence="1">
    <location>
        <begin position="70"/>
        <end position="90"/>
    </location>
</feature>
<feature type="topological domain" description="Intravirion" evidence="1">
    <location>
        <begin position="91"/>
        <end position="102"/>
    </location>
</feature>
<feature type="disulfide bond" description="Interchain (with gM)" evidence="1">
    <location>
        <position position="55"/>
    </location>
</feature>
<accession>P03196</accession>
<accession>Q777F2</accession>
<evidence type="ECO:0000255" key="1">
    <source>
        <dbReference type="HAMAP-Rule" id="MF_04037"/>
    </source>
</evidence>
<evidence type="ECO:0000269" key="2">
    <source>
    </source>
</evidence>
<evidence type="ECO:0000269" key="3">
    <source>
    </source>
</evidence>
<keyword id="KW-1015">Disulfide bond</keyword>
<keyword id="KW-1040">Host Golgi apparatus</keyword>
<keyword id="KW-1043">Host membrane</keyword>
<keyword id="KW-0472">Membrane</keyword>
<keyword id="KW-1185">Reference proteome</keyword>
<keyword id="KW-0732">Signal</keyword>
<keyword id="KW-0812">Transmembrane</keyword>
<keyword id="KW-1133">Transmembrane helix</keyword>
<keyword id="KW-0261">Viral envelope protein</keyword>
<keyword id="KW-0946">Virion</keyword>
<organism>
    <name type="scientific">Epstein-Barr virus (strain B95-8)</name>
    <name type="common">HHV-4</name>
    <name type="synonym">Human herpesvirus 4</name>
    <dbReference type="NCBI Taxonomy" id="10377"/>
    <lineage>
        <taxon>Viruses</taxon>
        <taxon>Duplodnaviria</taxon>
        <taxon>Heunggongvirae</taxon>
        <taxon>Peploviricota</taxon>
        <taxon>Herviviricetes</taxon>
        <taxon>Herpesvirales</taxon>
        <taxon>Orthoherpesviridae</taxon>
        <taxon>Gammaherpesvirinae</taxon>
        <taxon>Lymphocryptovirus</taxon>
        <taxon>Lymphocryptovirus humangamma4</taxon>
        <taxon>Epstein-Barr virus (strain GD1)</taxon>
    </lineage>
</organism>
<organismHost>
    <name type="scientific">Homo sapiens</name>
    <name type="common">Human</name>
    <dbReference type="NCBI Taxonomy" id="9606"/>
</organismHost>